<feature type="chain" id="PRO_0000264919" description="UvrABC system protein C">
    <location>
        <begin position="1"/>
        <end position="606"/>
    </location>
</feature>
<feature type="domain" description="GIY-YIG" evidence="1">
    <location>
        <begin position="18"/>
        <end position="96"/>
    </location>
</feature>
<feature type="domain" description="UVR" evidence="1">
    <location>
        <begin position="205"/>
        <end position="240"/>
    </location>
</feature>
<protein>
    <recommendedName>
        <fullName evidence="1">UvrABC system protein C</fullName>
        <shortName evidence="1">Protein UvrC</shortName>
    </recommendedName>
    <alternativeName>
        <fullName evidence="1">Excinuclease ABC subunit C</fullName>
    </alternativeName>
</protein>
<keyword id="KW-0963">Cytoplasm</keyword>
<keyword id="KW-0227">DNA damage</keyword>
<keyword id="KW-0228">DNA excision</keyword>
<keyword id="KW-0234">DNA repair</keyword>
<keyword id="KW-0267">Excision nuclease</keyword>
<keyword id="KW-1185">Reference proteome</keyword>
<keyword id="KW-0742">SOS response</keyword>
<gene>
    <name evidence="1" type="primary">uvrC</name>
    <name type="ordered locus">Nmul_A1271</name>
</gene>
<dbReference type="EMBL" id="CP000103">
    <property type="protein sequence ID" value="ABB74574.1"/>
    <property type="molecule type" value="Genomic_DNA"/>
</dbReference>
<dbReference type="RefSeq" id="WP_011380615.1">
    <property type="nucleotide sequence ID" value="NC_007614.1"/>
</dbReference>
<dbReference type="SMR" id="Q2Y9J7"/>
<dbReference type="STRING" id="323848.Nmul_A1271"/>
<dbReference type="KEGG" id="nmu:Nmul_A1271"/>
<dbReference type="eggNOG" id="COG0322">
    <property type="taxonomic scope" value="Bacteria"/>
</dbReference>
<dbReference type="HOGENOM" id="CLU_014841_3_0_4"/>
<dbReference type="OrthoDB" id="9804933at2"/>
<dbReference type="Proteomes" id="UP000002718">
    <property type="component" value="Chromosome"/>
</dbReference>
<dbReference type="GO" id="GO:0005737">
    <property type="term" value="C:cytoplasm"/>
    <property type="evidence" value="ECO:0007669"/>
    <property type="project" value="UniProtKB-SubCell"/>
</dbReference>
<dbReference type="GO" id="GO:0009380">
    <property type="term" value="C:excinuclease repair complex"/>
    <property type="evidence" value="ECO:0007669"/>
    <property type="project" value="InterPro"/>
</dbReference>
<dbReference type="GO" id="GO:0003677">
    <property type="term" value="F:DNA binding"/>
    <property type="evidence" value="ECO:0007669"/>
    <property type="project" value="UniProtKB-UniRule"/>
</dbReference>
<dbReference type="GO" id="GO:0009381">
    <property type="term" value="F:excinuclease ABC activity"/>
    <property type="evidence" value="ECO:0007669"/>
    <property type="project" value="UniProtKB-UniRule"/>
</dbReference>
<dbReference type="GO" id="GO:0006289">
    <property type="term" value="P:nucleotide-excision repair"/>
    <property type="evidence" value="ECO:0007669"/>
    <property type="project" value="UniProtKB-UniRule"/>
</dbReference>
<dbReference type="GO" id="GO:0009432">
    <property type="term" value="P:SOS response"/>
    <property type="evidence" value="ECO:0007669"/>
    <property type="project" value="UniProtKB-UniRule"/>
</dbReference>
<dbReference type="CDD" id="cd10434">
    <property type="entry name" value="GIY-YIG_UvrC_Cho"/>
    <property type="match status" value="1"/>
</dbReference>
<dbReference type="FunFam" id="3.30.420.340:FF:000001">
    <property type="entry name" value="UvrABC system protein C"/>
    <property type="match status" value="1"/>
</dbReference>
<dbReference type="FunFam" id="3.40.1440.10:FF:000001">
    <property type="entry name" value="UvrABC system protein C"/>
    <property type="match status" value="1"/>
</dbReference>
<dbReference type="Gene3D" id="1.10.150.20">
    <property type="entry name" value="5' to 3' exonuclease, C-terminal subdomain"/>
    <property type="match status" value="1"/>
</dbReference>
<dbReference type="Gene3D" id="3.40.1440.10">
    <property type="entry name" value="GIY-YIG endonuclease"/>
    <property type="match status" value="1"/>
</dbReference>
<dbReference type="Gene3D" id="4.10.860.10">
    <property type="entry name" value="UVR domain"/>
    <property type="match status" value="1"/>
</dbReference>
<dbReference type="Gene3D" id="3.30.420.340">
    <property type="entry name" value="UvrC, RNAse H endonuclease domain"/>
    <property type="match status" value="1"/>
</dbReference>
<dbReference type="HAMAP" id="MF_00203">
    <property type="entry name" value="UvrC"/>
    <property type="match status" value="1"/>
</dbReference>
<dbReference type="InterPro" id="IPR000305">
    <property type="entry name" value="GIY-YIG_endonuc"/>
</dbReference>
<dbReference type="InterPro" id="IPR035901">
    <property type="entry name" value="GIY-YIG_endonuc_sf"/>
</dbReference>
<dbReference type="InterPro" id="IPR047296">
    <property type="entry name" value="GIY-YIG_UvrC_Cho"/>
</dbReference>
<dbReference type="InterPro" id="IPR003583">
    <property type="entry name" value="Hlx-hairpin-Hlx_DNA-bd_motif"/>
</dbReference>
<dbReference type="InterPro" id="IPR010994">
    <property type="entry name" value="RuvA_2-like"/>
</dbReference>
<dbReference type="InterPro" id="IPR001943">
    <property type="entry name" value="UVR_dom"/>
</dbReference>
<dbReference type="InterPro" id="IPR036876">
    <property type="entry name" value="UVR_dom_sf"/>
</dbReference>
<dbReference type="InterPro" id="IPR050066">
    <property type="entry name" value="UvrABC_protein_C"/>
</dbReference>
<dbReference type="InterPro" id="IPR004791">
    <property type="entry name" value="UvrC"/>
</dbReference>
<dbReference type="InterPro" id="IPR001162">
    <property type="entry name" value="UvrC_RNase_H_dom"/>
</dbReference>
<dbReference type="InterPro" id="IPR038476">
    <property type="entry name" value="UvrC_RNase_H_dom_sf"/>
</dbReference>
<dbReference type="NCBIfam" id="NF001824">
    <property type="entry name" value="PRK00558.1-5"/>
    <property type="match status" value="1"/>
</dbReference>
<dbReference type="NCBIfam" id="TIGR00194">
    <property type="entry name" value="uvrC"/>
    <property type="match status" value="1"/>
</dbReference>
<dbReference type="PANTHER" id="PTHR30562:SF1">
    <property type="entry name" value="UVRABC SYSTEM PROTEIN C"/>
    <property type="match status" value="1"/>
</dbReference>
<dbReference type="PANTHER" id="PTHR30562">
    <property type="entry name" value="UVRC/OXIDOREDUCTASE"/>
    <property type="match status" value="1"/>
</dbReference>
<dbReference type="Pfam" id="PF01541">
    <property type="entry name" value="GIY-YIG"/>
    <property type="match status" value="1"/>
</dbReference>
<dbReference type="Pfam" id="PF14520">
    <property type="entry name" value="HHH_5"/>
    <property type="match status" value="1"/>
</dbReference>
<dbReference type="Pfam" id="PF02151">
    <property type="entry name" value="UVR"/>
    <property type="match status" value="1"/>
</dbReference>
<dbReference type="Pfam" id="PF22920">
    <property type="entry name" value="UvrC_RNaseH"/>
    <property type="match status" value="1"/>
</dbReference>
<dbReference type="Pfam" id="PF08459">
    <property type="entry name" value="UvrC_RNaseH_dom"/>
    <property type="match status" value="1"/>
</dbReference>
<dbReference type="SMART" id="SM00465">
    <property type="entry name" value="GIYc"/>
    <property type="match status" value="1"/>
</dbReference>
<dbReference type="SMART" id="SM00278">
    <property type="entry name" value="HhH1"/>
    <property type="match status" value="2"/>
</dbReference>
<dbReference type="SUPFAM" id="SSF46600">
    <property type="entry name" value="C-terminal UvrC-binding domain of UvrB"/>
    <property type="match status" value="1"/>
</dbReference>
<dbReference type="SUPFAM" id="SSF82771">
    <property type="entry name" value="GIY-YIG endonuclease"/>
    <property type="match status" value="1"/>
</dbReference>
<dbReference type="SUPFAM" id="SSF47781">
    <property type="entry name" value="RuvA domain 2-like"/>
    <property type="match status" value="1"/>
</dbReference>
<dbReference type="PROSITE" id="PS50164">
    <property type="entry name" value="GIY_YIG"/>
    <property type="match status" value="1"/>
</dbReference>
<dbReference type="PROSITE" id="PS50151">
    <property type="entry name" value="UVR"/>
    <property type="match status" value="1"/>
</dbReference>
<dbReference type="PROSITE" id="PS50165">
    <property type="entry name" value="UVRC"/>
    <property type="match status" value="1"/>
</dbReference>
<comment type="function">
    <text evidence="1">The UvrABC repair system catalyzes the recognition and processing of DNA lesions. UvrC both incises the 5' and 3' sides of the lesion. The N-terminal half is responsible for the 3' incision and the C-terminal half is responsible for the 5' incision.</text>
</comment>
<comment type="subunit">
    <text evidence="1">Interacts with UvrB in an incision complex.</text>
</comment>
<comment type="subcellular location">
    <subcellularLocation>
        <location evidence="1">Cytoplasm</location>
    </subcellularLocation>
</comment>
<comment type="similarity">
    <text evidence="1">Belongs to the UvrC family.</text>
</comment>
<organism>
    <name type="scientific">Nitrosospira multiformis (strain ATCC 25196 / NCIMB 11849 / C 71)</name>
    <dbReference type="NCBI Taxonomy" id="323848"/>
    <lineage>
        <taxon>Bacteria</taxon>
        <taxon>Pseudomonadati</taxon>
        <taxon>Pseudomonadota</taxon>
        <taxon>Betaproteobacteria</taxon>
        <taxon>Nitrosomonadales</taxon>
        <taxon>Nitrosomonadaceae</taxon>
        <taxon>Nitrosospira</taxon>
    </lineage>
</organism>
<proteinExistence type="inferred from homology"/>
<reference key="1">
    <citation type="submission" date="2005-08" db="EMBL/GenBank/DDBJ databases">
        <title>Complete sequence of chromosome 1 of Nitrosospira multiformis ATCC 25196.</title>
        <authorList>
            <person name="Copeland A."/>
            <person name="Lucas S."/>
            <person name="Lapidus A."/>
            <person name="Barry K."/>
            <person name="Detter J.C."/>
            <person name="Glavina T."/>
            <person name="Hammon N."/>
            <person name="Israni S."/>
            <person name="Pitluck S."/>
            <person name="Chain P."/>
            <person name="Malfatti S."/>
            <person name="Shin M."/>
            <person name="Vergez L."/>
            <person name="Schmutz J."/>
            <person name="Larimer F."/>
            <person name="Land M."/>
            <person name="Hauser L."/>
            <person name="Kyrpides N."/>
            <person name="Lykidis A."/>
            <person name="Richardson P."/>
        </authorList>
    </citation>
    <scope>NUCLEOTIDE SEQUENCE [LARGE SCALE GENOMIC DNA]</scope>
    <source>
        <strain>ATCC 25196 / NCIMB 11849 / C 71</strain>
    </source>
</reference>
<evidence type="ECO:0000255" key="1">
    <source>
        <dbReference type="HAMAP-Rule" id="MF_00203"/>
    </source>
</evidence>
<accession>Q2Y9J7</accession>
<sequence length="606" mass="67634">MQAEPAFDAKAFCAGLPSQPGVYRMMNSAGQVIYVGKAIDLKKRVSSYFQKNGLAPRTQLMVSQIAGIETTVTRSEAEALLLENNLIKSLNPRYNILFRDDKSYPYVILSGHRFPRLGFHRGPLDKKHHYFGPFPNAGMVRESIQLLQKVFRIRTCEDSVFSNRTRPCLLYQIKRCSGPCVDLVSEEVYAEDARDAELFLQGKQTEVLKSITRKMHEAAEEQEYEQAALFRDQIQSLRKICERQFVDSGRALDADIVACVAENNGGGRVCVNLAMVRGGRHLGDKSFFPQNAEGYDLATVAEAFLAQHYLNRSIPDLIIVGERVPRESLQALLTQQAGHKVIINVNPIGSRRVWLEMATENAALALEQMLGRQASQEERLLALQQALDMTGLSRIECFDISHTMGEATIASCVVYDNFGMRNSEYRRYNITDITPGDDYAAMRDVLSRRYHKIAEGEGNLPDLILIDGGRGQINAALEVMVELGLNDANLVGVAKGEERKPGLEQLIFPGVKKPLQLSKDHPGLHLIQQIRDEAHRFAIYGHRAKLGKARVSSSLEQIAGIGAKRRQSLLARFGGLKGVRTASIEELQQADGISRALAEKIYRELH</sequence>
<name>UVRC_NITMU</name>